<gene>
    <name evidence="1" type="primary">truB</name>
    <name type="ordered locus">FTN_1462</name>
</gene>
<reference key="1">
    <citation type="journal article" date="2007" name="Genome Biol.">
        <title>Comparison of Francisella tularensis genomes reveals evolutionary events associated with the emergence of human pathogenic strains.</title>
        <authorList>
            <person name="Rohmer L."/>
            <person name="Fong C."/>
            <person name="Abmayr S."/>
            <person name="Wasnick M."/>
            <person name="Larson Freeman T.J."/>
            <person name="Radey M."/>
            <person name="Guina T."/>
            <person name="Svensson K."/>
            <person name="Hayden H.S."/>
            <person name="Jacobs M."/>
            <person name="Gallagher L.A."/>
            <person name="Manoil C."/>
            <person name="Ernst R.K."/>
            <person name="Drees B."/>
            <person name="Buckley D."/>
            <person name="Haugen E."/>
            <person name="Bovee D."/>
            <person name="Zhou Y."/>
            <person name="Chang J."/>
            <person name="Levy R."/>
            <person name="Lim R."/>
            <person name="Gillett W."/>
            <person name="Guenthener D."/>
            <person name="Kang A."/>
            <person name="Shaffer S.A."/>
            <person name="Taylor G."/>
            <person name="Chen J."/>
            <person name="Gallis B."/>
            <person name="D'Argenio D.A."/>
            <person name="Forsman M."/>
            <person name="Olson M.V."/>
            <person name="Goodlett D.R."/>
            <person name="Kaul R."/>
            <person name="Miller S.I."/>
            <person name="Brittnacher M.J."/>
        </authorList>
    </citation>
    <scope>NUCLEOTIDE SEQUENCE [LARGE SCALE GENOMIC DNA]</scope>
    <source>
        <strain>U112</strain>
    </source>
</reference>
<protein>
    <recommendedName>
        <fullName evidence="1">tRNA pseudouridine synthase B</fullName>
        <ecNumber evidence="1">5.4.99.25</ecNumber>
    </recommendedName>
    <alternativeName>
        <fullName evidence="1">tRNA pseudouridine(55) synthase</fullName>
        <shortName evidence="1">Psi55 synthase</shortName>
    </alternativeName>
    <alternativeName>
        <fullName evidence="1">tRNA pseudouridylate synthase</fullName>
    </alternativeName>
    <alternativeName>
        <fullName evidence="1">tRNA-uridine isomerase</fullName>
    </alternativeName>
</protein>
<organism>
    <name type="scientific">Francisella tularensis subsp. novicida (strain U112)</name>
    <dbReference type="NCBI Taxonomy" id="401614"/>
    <lineage>
        <taxon>Bacteria</taxon>
        <taxon>Pseudomonadati</taxon>
        <taxon>Pseudomonadota</taxon>
        <taxon>Gammaproteobacteria</taxon>
        <taxon>Thiotrichales</taxon>
        <taxon>Francisellaceae</taxon>
        <taxon>Francisella</taxon>
    </lineage>
</organism>
<sequence length="302" mass="33917">MKKNRLNLNGVVVINKAKDVSSNKVLQQLKYLFNAQKAGHTGTLDPMATGVLPICFGRATKIAQYLLDADKEYIATIRLGIETDSGDAEGEIIAKSPNIPELSAEYLETVLAKFRGDVVQIPPMYSALKYNGQPLYKLAREGKTVEVKSRNIKIYELELLEFDIDSLKIRVKCSKGTYIRSLAIDIGKTLGCGGHLIALQRTQSGPFKLSEAFRLEQLKDLSFEQKIASITNIESVFIDKPIYSLLEEEKDDLYKRGLFADKPHLDGTVRIYDDEKFVAIAEFDKGKLINKKFFDQDILISE</sequence>
<evidence type="ECO:0000255" key="1">
    <source>
        <dbReference type="HAMAP-Rule" id="MF_01080"/>
    </source>
</evidence>
<accession>A0Q7W5</accession>
<comment type="function">
    <text evidence="1">Responsible for synthesis of pseudouridine from uracil-55 in the psi GC loop of transfer RNAs.</text>
</comment>
<comment type="catalytic activity">
    <reaction evidence="1">
        <text>uridine(55) in tRNA = pseudouridine(55) in tRNA</text>
        <dbReference type="Rhea" id="RHEA:42532"/>
        <dbReference type="Rhea" id="RHEA-COMP:10101"/>
        <dbReference type="Rhea" id="RHEA-COMP:10102"/>
        <dbReference type="ChEBI" id="CHEBI:65314"/>
        <dbReference type="ChEBI" id="CHEBI:65315"/>
        <dbReference type="EC" id="5.4.99.25"/>
    </reaction>
</comment>
<comment type="similarity">
    <text evidence="1">Belongs to the pseudouridine synthase TruB family. Type 1 subfamily.</text>
</comment>
<proteinExistence type="inferred from homology"/>
<name>TRUB_FRATN</name>
<dbReference type="EC" id="5.4.99.25" evidence="1"/>
<dbReference type="EMBL" id="CP000439">
    <property type="protein sequence ID" value="ABK90330.1"/>
    <property type="molecule type" value="Genomic_DNA"/>
</dbReference>
<dbReference type="RefSeq" id="WP_003040440.1">
    <property type="nucleotide sequence ID" value="NZ_CP009633.1"/>
</dbReference>
<dbReference type="SMR" id="A0Q7W5"/>
<dbReference type="KEGG" id="ftn:FTN_1462"/>
<dbReference type="KEGG" id="ftx:AW25_539"/>
<dbReference type="BioCyc" id="FTUL401614:G1G75-1510-MONOMER"/>
<dbReference type="Proteomes" id="UP000000762">
    <property type="component" value="Chromosome"/>
</dbReference>
<dbReference type="GO" id="GO:0003723">
    <property type="term" value="F:RNA binding"/>
    <property type="evidence" value="ECO:0007669"/>
    <property type="project" value="InterPro"/>
</dbReference>
<dbReference type="GO" id="GO:0160148">
    <property type="term" value="F:tRNA pseudouridine(55) synthase activity"/>
    <property type="evidence" value="ECO:0007669"/>
    <property type="project" value="UniProtKB-EC"/>
</dbReference>
<dbReference type="GO" id="GO:1990481">
    <property type="term" value="P:mRNA pseudouridine synthesis"/>
    <property type="evidence" value="ECO:0007669"/>
    <property type="project" value="TreeGrafter"/>
</dbReference>
<dbReference type="GO" id="GO:0031119">
    <property type="term" value="P:tRNA pseudouridine synthesis"/>
    <property type="evidence" value="ECO:0007669"/>
    <property type="project" value="UniProtKB-UniRule"/>
</dbReference>
<dbReference type="CDD" id="cd02573">
    <property type="entry name" value="PseudoU_synth_EcTruB"/>
    <property type="match status" value="1"/>
</dbReference>
<dbReference type="FunFam" id="3.30.2350.10:FF:000011">
    <property type="entry name" value="tRNA pseudouridine synthase B"/>
    <property type="match status" value="1"/>
</dbReference>
<dbReference type="Gene3D" id="3.30.2350.10">
    <property type="entry name" value="Pseudouridine synthase"/>
    <property type="match status" value="1"/>
</dbReference>
<dbReference type="HAMAP" id="MF_01080">
    <property type="entry name" value="TruB_bact"/>
    <property type="match status" value="1"/>
</dbReference>
<dbReference type="InterPro" id="IPR020103">
    <property type="entry name" value="PsdUridine_synth_cat_dom_sf"/>
</dbReference>
<dbReference type="InterPro" id="IPR002501">
    <property type="entry name" value="PsdUridine_synth_N"/>
</dbReference>
<dbReference type="InterPro" id="IPR014780">
    <property type="entry name" value="tRNA_psdUridine_synth_TruB"/>
</dbReference>
<dbReference type="InterPro" id="IPR032819">
    <property type="entry name" value="TruB_C"/>
</dbReference>
<dbReference type="NCBIfam" id="TIGR00431">
    <property type="entry name" value="TruB"/>
    <property type="match status" value="1"/>
</dbReference>
<dbReference type="PANTHER" id="PTHR13767:SF2">
    <property type="entry name" value="PSEUDOURIDYLATE SYNTHASE TRUB1"/>
    <property type="match status" value="1"/>
</dbReference>
<dbReference type="PANTHER" id="PTHR13767">
    <property type="entry name" value="TRNA-PSEUDOURIDINE SYNTHASE"/>
    <property type="match status" value="1"/>
</dbReference>
<dbReference type="Pfam" id="PF16198">
    <property type="entry name" value="TruB_C_2"/>
    <property type="match status" value="1"/>
</dbReference>
<dbReference type="Pfam" id="PF01509">
    <property type="entry name" value="TruB_N"/>
    <property type="match status" value="1"/>
</dbReference>
<dbReference type="SUPFAM" id="SSF55120">
    <property type="entry name" value="Pseudouridine synthase"/>
    <property type="match status" value="1"/>
</dbReference>
<keyword id="KW-0413">Isomerase</keyword>
<keyword id="KW-0819">tRNA processing</keyword>
<feature type="chain" id="PRO_1000084596" description="tRNA pseudouridine synthase B">
    <location>
        <begin position="1"/>
        <end position="302"/>
    </location>
</feature>
<feature type="active site" description="Nucleophile" evidence="1">
    <location>
        <position position="45"/>
    </location>
</feature>